<sequence length="364" mass="40746">MGILEKISEIEKEIARTQKNKATEYHLGLLKAKLAKYRAQLLEPSKSASSKGEGFDVMKSGDARVALIGFPSVGKSTFLSLMTSTASEAASYEFTTLTCIPGVIEYKGANIQLLDLPGIIEGAAQGKGRGRQVIAVARTADVIIMMLDATKGEVQRSLLEKELESVGIRLNKHKPNIYFKPKKGGGISFNSTVTLTQCSEKLVQLILHEYKIFNAEVLFREDCSPDEFIDVIVGNRVYMPCLYVYNKIDQISMEEVDRLARKPNSVVISCGMKLNLDYLLEMLWEYLALTCIYTKKRGQRPDFTDAIILRKGASVEHVCHRIHRSLASQFKYALVWGTSTKYSPQRVGLTHTMEHEDVIQIVKK</sequence>
<protein>
    <recommendedName>
        <fullName>Developmentally-regulated GTP-binding protein 2</fullName>
        <shortName>DRG-2</shortName>
    </recommendedName>
    <alternativeName>
        <fullName>Translation factor GTPase DRG2</fullName>
        <shortName>TRAFAC GTPase DRG2</shortName>
        <ecNumber evidence="10">3.6.5.-</ecNumber>
    </alternativeName>
</protein>
<dbReference type="EC" id="3.6.5.-" evidence="10"/>
<dbReference type="EMBL" id="X80754">
    <property type="protein sequence ID" value="CAA56730.1"/>
    <property type="molecule type" value="mRNA"/>
</dbReference>
<dbReference type="EMBL" id="BT006976">
    <property type="protein sequence ID" value="AAP35622.1"/>
    <property type="molecule type" value="mRNA"/>
</dbReference>
<dbReference type="EMBL" id="AK313362">
    <property type="protein sequence ID" value="BAG36162.1"/>
    <property type="molecule type" value="mRNA"/>
</dbReference>
<dbReference type="EMBL" id="CH471196">
    <property type="protein sequence ID" value="EAW55669.1"/>
    <property type="molecule type" value="Genomic_DNA"/>
</dbReference>
<dbReference type="EMBL" id="BC000493">
    <property type="protein sequence ID" value="AAH00493.1"/>
    <property type="molecule type" value="mRNA"/>
</dbReference>
<dbReference type="CCDS" id="CCDS11191.1"/>
<dbReference type="PIR" id="A55014">
    <property type="entry name" value="A55014"/>
</dbReference>
<dbReference type="RefSeq" id="NP_001379.1">
    <property type="nucleotide sequence ID" value="NM_001388.5"/>
</dbReference>
<dbReference type="SMR" id="P55039"/>
<dbReference type="BioGRID" id="108153">
    <property type="interactions" value="79"/>
</dbReference>
<dbReference type="CORUM" id="P55039"/>
<dbReference type="FunCoup" id="P55039">
    <property type="interactions" value="4483"/>
</dbReference>
<dbReference type="IntAct" id="P55039">
    <property type="interactions" value="27"/>
</dbReference>
<dbReference type="STRING" id="9606.ENSP00000225729"/>
<dbReference type="GlyGen" id="P55039">
    <property type="glycosylation" value="1 site, 1 O-linked glycan (1 site)"/>
</dbReference>
<dbReference type="iPTMnet" id="P55039"/>
<dbReference type="MetOSite" id="P55039"/>
<dbReference type="PhosphoSitePlus" id="P55039"/>
<dbReference type="SwissPalm" id="P55039"/>
<dbReference type="BioMuta" id="DRG2"/>
<dbReference type="DMDM" id="1706518"/>
<dbReference type="jPOST" id="P55039"/>
<dbReference type="MassIVE" id="P55039"/>
<dbReference type="PaxDb" id="9606-ENSP00000225729"/>
<dbReference type="PeptideAtlas" id="P55039"/>
<dbReference type="ProteomicsDB" id="56764"/>
<dbReference type="Pumba" id="P55039"/>
<dbReference type="Antibodypedia" id="1408">
    <property type="antibodies" value="127 antibodies from 23 providers"/>
</dbReference>
<dbReference type="DNASU" id="1819"/>
<dbReference type="Ensembl" id="ENST00000225729.8">
    <property type="protein sequence ID" value="ENSP00000225729.3"/>
    <property type="gene ID" value="ENSG00000108591.10"/>
</dbReference>
<dbReference type="GeneID" id="1819"/>
<dbReference type="KEGG" id="hsa:1819"/>
<dbReference type="MANE-Select" id="ENST00000225729.8">
    <property type="protein sequence ID" value="ENSP00000225729.3"/>
    <property type="RefSeq nucleotide sequence ID" value="NM_001388.5"/>
    <property type="RefSeq protein sequence ID" value="NP_001379.1"/>
</dbReference>
<dbReference type="UCSC" id="uc002gsh.3">
    <property type="organism name" value="human"/>
</dbReference>
<dbReference type="AGR" id="HGNC:3030"/>
<dbReference type="CTD" id="1819"/>
<dbReference type="DisGeNET" id="1819"/>
<dbReference type="GeneCards" id="DRG2"/>
<dbReference type="HGNC" id="HGNC:3030">
    <property type="gene designation" value="DRG2"/>
</dbReference>
<dbReference type="HPA" id="ENSG00000108591">
    <property type="expression patterns" value="Low tissue specificity"/>
</dbReference>
<dbReference type="MIM" id="602986">
    <property type="type" value="gene"/>
</dbReference>
<dbReference type="neXtProt" id="NX_P55039"/>
<dbReference type="OpenTargets" id="ENSG00000108591"/>
<dbReference type="PharmGKB" id="PA27484"/>
<dbReference type="VEuPathDB" id="HostDB:ENSG00000108591"/>
<dbReference type="eggNOG" id="KOG1486">
    <property type="taxonomic scope" value="Eukaryota"/>
</dbReference>
<dbReference type="GeneTree" id="ENSGT00940000153340"/>
<dbReference type="HOGENOM" id="CLU_044997_0_0_1"/>
<dbReference type="InParanoid" id="P55039"/>
<dbReference type="OMA" id="DVCDQVH"/>
<dbReference type="OrthoDB" id="1708588at2759"/>
<dbReference type="PAN-GO" id="P55039">
    <property type="GO annotations" value="3 GO annotations based on evolutionary models"/>
</dbReference>
<dbReference type="PhylomeDB" id="P55039"/>
<dbReference type="TreeFam" id="TF105706"/>
<dbReference type="PathwayCommons" id="P55039"/>
<dbReference type="Reactome" id="R-HSA-9629569">
    <property type="pathway name" value="Protein hydroxylation"/>
</dbReference>
<dbReference type="SignaLink" id="P55039"/>
<dbReference type="BioGRID-ORCS" id="1819">
    <property type="hits" value="24 hits in 1153 CRISPR screens"/>
</dbReference>
<dbReference type="CD-CODE" id="91857CE7">
    <property type="entry name" value="Nucleolus"/>
</dbReference>
<dbReference type="ChiTaRS" id="DRG2">
    <property type="organism name" value="human"/>
</dbReference>
<dbReference type="GeneWiki" id="DRG2"/>
<dbReference type="GenomeRNAi" id="1819"/>
<dbReference type="Pharos" id="P55039">
    <property type="development level" value="Tbio"/>
</dbReference>
<dbReference type="PRO" id="PR:P55039"/>
<dbReference type="Proteomes" id="UP000005640">
    <property type="component" value="Chromosome 17"/>
</dbReference>
<dbReference type="RNAct" id="P55039">
    <property type="molecule type" value="protein"/>
</dbReference>
<dbReference type="Bgee" id="ENSG00000108591">
    <property type="expression patterns" value="Expressed in granulocyte and 171 other cell types or tissues"/>
</dbReference>
<dbReference type="ExpressionAtlas" id="P55039">
    <property type="expression patterns" value="baseline and differential"/>
</dbReference>
<dbReference type="GO" id="GO:0005737">
    <property type="term" value="C:cytoplasm"/>
    <property type="evidence" value="ECO:0000314"/>
    <property type="project" value="UniProtKB"/>
</dbReference>
<dbReference type="GO" id="GO:0005829">
    <property type="term" value="C:cytosol"/>
    <property type="evidence" value="ECO:0000314"/>
    <property type="project" value="HPA"/>
</dbReference>
<dbReference type="GO" id="GO:0043231">
    <property type="term" value="C:intracellular membrane-bounded organelle"/>
    <property type="evidence" value="ECO:0000314"/>
    <property type="project" value="HPA"/>
</dbReference>
<dbReference type="GO" id="GO:0016020">
    <property type="term" value="C:membrane"/>
    <property type="evidence" value="ECO:0007005"/>
    <property type="project" value="UniProtKB"/>
</dbReference>
<dbReference type="GO" id="GO:0005654">
    <property type="term" value="C:nucleoplasm"/>
    <property type="evidence" value="ECO:0000314"/>
    <property type="project" value="HPA"/>
</dbReference>
<dbReference type="GO" id="GO:0005634">
    <property type="term" value="C:nucleus"/>
    <property type="evidence" value="ECO:0000314"/>
    <property type="project" value="UniProtKB"/>
</dbReference>
<dbReference type="GO" id="GO:0005525">
    <property type="term" value="F:GTP binding"/>
    <property type="evidence" value="ECO:0000318"/>
    <property type="project" value="GO_Central"/>
</dbReference>
<dbReference type="GO" id="GO:0003924">
    <property type="term" value="F:GTPase activity"/>
    <property type="evidence" value="ECO:0000314"/>
    <property type="project" value="UniProtKB"/>
</dbReference>
<dbReference type="GO" id="GO:0046872">
    <property type="term" value="F:metal ion binding"/>
    <property type="evidence" value="ECO:0007669"/>
    <property type="project" value="UniProtKB-KW"/>
</dbReference>
<dbReference type="GO" id="GO:0003723">
    <property type="term" value="F:RNA binding"/>
    <property type="evidence" value="ECO:0000314"/>
    <property type="project" value="UniProtKB"/>
</dbReference>
<dbReference type="GO" id="GO:0002181">
    <property type="term" value="P:cytoplasmic translation"/>
    <property type="evidence" value="ECO:0000318"/>
    <property type="project" value="GO_Central"/>
</dbReference>
<dbReference type="GO" id="GO:0007165">
    <property type="term" value="P:signal transduction"/>
    <property type="evidence" value="ECO:0000304"/>
    <property type="project" value="ProtInc"/>
</dbReference>
<dbReference type="CDD" id="cd01896">
    <property type="entry name" value="DRG"/>
    <property type="match status" value="1"/>
</dbReference>
<dbReference type="CDD" id="cd17231">
    <property type="entry name" value="TGS_DRG2"/>
    <property type="match status" value="1"/>
</dbReference>
<dbReference type="FunFam" id="3.10.20.30:FF:000016">
    <property type="entry name" value="Developmentally-regulated GTP-binding protein 2"/>
    <property type="match status" value="1"/>
</dbReference>
<dbReference type="FunFam" id="3.40.50.300:FF:000740">
    <property type="entry name" value="Putative GTP-binding protein 1"/>
    <property type="match status" value="1"/>
</dbReference>
<dbReference type="Gene3D" id="3.10.20.30">
    <property type="match status" value="1"/>
</dbReference>
<dbReference type="Gene3D" id="6.10.140.1070">
    <property type="match status" value="2"/>
</dbReference>
<dbReference type="InterPro" id="IPR012675">
    <property type="entry name" value="Beta-grasp_dom_sf"/>
</dbReference>
<dbReference type="InterPro" id="IPR045001">
    <property type="entry name" value="DRG"/>
</dbReference>
<dbReference type="InterPro" id="IPR031167">
    <property type="entry name" value="G_OBG"/>
</dbReference>
<dbReference type="InterPro" id="IPR006073">
    <property type="entry name" value="GTP-bd"/>
</dbReference>
<dbReference type="InterPro" id="IPR031662">
    <property type="entry name" value="GTP-binding_2"/>
</dbReference>
<dbReference type="InterPro" id="IPR006074">
    <property type="entry name" value="GTP1-OBG_CS"/>
</dbReference>
<dbReference type="InterPro" id="IPR027417">
    <property type="entry name" value="P-loop_NTPase"/>
</dbReference>
<dbReference type="InterPro" id="IPR005225">
    <property type="entry name" value="Small_GTP-bd"/>
</dbReference>
<dbReference type="InterPro" id="IPR004095">
    <property type="entry name" value="TGS"/>
</dbReference>
<dbReference type="InterPro" id="IPR012676">
    <property type="entry name" value="TGS-like"/>
</dbReference>
<dbReference type="NCBIfam" id="TIGR00231">
    <property type="entry name" value="small_GTP"/>
    <property type="match status" value="1"/>
</dbReference>
<dbReference type="PANTHER" id="PTHR43127">
    <property type="entry name" value="DEVELOPMENTALLY-REGULATED GTP-BINDING PROTEIN 2"/>
    <property type="match status" value="1"/>
</dbReference>
<dbReference type="Pfam" id="PF01926">
    <property type="entry name" value="MMR_HSR1"/>
    <property type="match status" value="1"/>
</dbReference>
<dbReference type="Pfam" id="PF16897">
    <property type="entry name" value="MMR_HSR1_Xtn"/>
    <property type="match status" value="1"/>
</dbReference>
<dbReference type="Pfam" id="PF02824">
    <property type="entry name" value="TGS"/>
    <property type="match status" value="1"/>
</dbReference>
<dbReference type="PRINTS" id="PR00326">
    <property type="entry name" value="GTP1OBG"/>
</dbReference>
<dbReference type="SUPFAM" id="SSF52540">
    <property type="entry name" value="P-loop containing nucleoside triphosphate hydrolases"/>
    <property type="match status" value="1"/>
</dbReference>
<dbReference type="SUPFAM" id="SSF81271">
    <property type="entry name" value="TGS-like"/>
    <property type="match status" value="1"/>
</dbReference>
<dbReference type="PROSITE" id="PS51710">
    <property type="entry name" value="G_OBG"/>
    <property type="match status" value="1"/>
</dbReference>
<dbReference type="PROSITE" id="PS00905">
    <property type="entry name" value="GTP1_OBG"/>
    <property type="match status" value="1"/>
</dbReference>
<dbReference type="PROSITE" id="PS51880">
    <property type="entry name" value="TGS"/>
    <property type="match status" value="1"/>
</dbReference>
<comment type="function">
    <text evidence="6">Catalyzes the conversion of GTP to GDP through hydrolysis of the gamma-phosphate bond in GTP. When hydroxylated at C-3 of 'Lys-21' by JMJD7, may bind to RNA and play a role in translation.</text>
</comment>
<comment type="catalytic activity">
    <reaction evidence="6">
        <text>GTP + H2O = GDP + phosphate + H(+)</text>
        <dbReference type="Rhea" id="RHEA:19669"/>
        <dbReference type="ChEBI" id="CHEBI:15377"/>
        <dbReference type="ChEBI" id="CHEBI:15378"/>
        <dbReference type="ChEBI" id="CHEBI:37565"/>
        <dbReference type="ChEBI" id="CHEBI:43474"/>
        <dbReference type="ChEBI" id="CHEBI:58189"/>
    </reaction>
    <physiologicalReaction direction="left-to-right" evidence="6">
        <dbReference type="Rhea" id="RHEA:19670"/>
    </physiologicalReaction>
</comment>
<comment type="cofactor">
    <cofactor evidence="10">
        <name>Mg(2+)</name>
        <dbReference type="ChEBI" id="CHEBI:18420"/>
    </cofactor>
</comment>
<comment type="subunit">
    <text evidence="1 2 6">Interacts with RWDD1; this interaction confers protection to polyubiquitination and proteolytic degradation (By similarity). Interacts with JMJD7; this interaction is direct (PubMed:29915238).</text>
</comment>
<comment type="interaction">
    <interactant intactId="EBI-750565">
        <id>P55039</id>
    </interactant>
    <interactant intactId="EBI-299104">
        <id>P38919</id>
        <label>EIF4A3</label>
    </interactant>
    <organismsDiffer>false</organismsDiffer>
    <experiments>3</experiments>
</comment>
<comment type="interaction">
    <interactant intactId="EBI-750565">
        <id>P55039</id>
    </interactant>
    <interactant intactId="EBI-9090173">
        <id>P0C870</id>
        <label>JMJD7</label>
    </interactant>
    <organismsDiffer>false</organismsDiffer>
    <experiments>3</experiments>
</comment>
<comment type="interaction">
    <interactant intactId="EBI-750565">
        <id>P55039</id>
    </interactant>
    <interactant intactId="EBI-1055254">
        <id>Q8WXH2</id>
        <label>JPH3</label>
    </interactant>
    <organismsDiffer>false</organismsDiffer>
    <experiments>3</experiments>
</comment>
<comment type="interaction">
    <interactant intactId="EBI-750565">
        <id>P55039</id>
    </interactant>
    <interactant intactId="EBI-8641936">
        <id>Q15742</id>
        <label>NAB2</label>
    </interactant>
    <organismsDiffer>false</organismsDiffer>
    <experiments>3</experiments>
</comment>
<comment type="interaction">
    <interactant intactId="EBI-750565">
        <id>P55039</id>
    </interactant>
    <interactant intactId="EBI-748952">
        <id>Q9H446</id>
        <label>RWDD1</label>
    </interactant>
    <organismsDiffer>false</organismsDiffer>
    <experiments>9</experiments>
</comment>
<comment type="interaction">
    <interactant intactId="EBI-750565">
        <id>P55039</id>
    </interactant>
    <interactant intactId="EBI-5235340">
        <id>Q7Z699</id>
        <label>SPRED1</label>
    </interactant>
    <organismsDiffer>false</organismsDiffer>
    <experiments>3</experiments>
</comment>
<comment type="interaction">
    <interactant intactId="EBI-750565">
        <id>P55039</id>
    </interactant>
    <interactant intactId="EBI-3918381">
        <id>Q96PN8</id>
        <label>TSSK3</label>
    </interactant>
    <organismsDiffer>false</organismsDiffer>
    <experiments>3</experiments>
</comment>
<comment type="subcellular location">
    <subcellularLocation>
        <location evidence="6">Nucleus</location>
    </subcellularLocation>
    <subcellularLocation>
        <location evidence="6">Cytoplasm</location>
    </subcellularLocation>
</comment>
<comment type="tissue specificity">
    <text>Highest levels in skeletal muscle, heart and kidney. Low levels in colon, thymus, spleen, small intestine, lung and Leukocytes.</text>
</comment>
<comment type="PTM">
    <text evidence="6 7">Hydroxylated (with S stereochemistry) at C-3 of Lys-21 by JMJD7; this modification hinders trypsin-catalyzed proteolysis in vitro.</text>
</comment>
<comment type="PTM">
    <text evidence="2">Polyubiquitinated.</text>
</comment>
<comment type="similarity">
    <text evidence="3">Belongs to the TRAFAC class OBG-HflX-like GTPase superfamily. OBG GTPase family.</text>
</comment>
<accession>P55039</accession>
<accession>B2R8G5</accession>
<accession>Q53Y50</accession>
<accession>Q9BWB2</accession>
<gene>
    <name evidence="9 11" type="primary">DRG2</name>
</gene>
<reference key="1">
    <citation type="journal article" date="1994" name="J. Biol. Chem.">
        <title>A novel GTP-binding protein which is selectively repressed in SV40 transformed fibroblasts.</title>
        <authorList>
            <person name="Schenker T."/>
            <person name="Lach C."/>
            <person name="Kessler B."/>
            <person name="Calderara S."/>
            <person name="Trueb B."/>
        </authorList>
    </citation>
    <scope>NUCLEOTIDE SEQUENCE [MRNA]</scope>
    <source>
        <tissue>Lung</tissue>
    </source>
</reference>
<reference key="2">
    <citation type="submission" date="2003-05" db="EMBL/GenBank/DDBJ databases">
        <title>Cloning of human full-length CDSs in BD Creator(TM) system donor vector.</title>
        <authorList>
            <person name="Kalnine N."/>
            <person name="Chen X."/>
            <person name="Rolfs A."/>
            <person name="Halleck A."/>
            <person name="Hines L."/>
            <person name="Eisenstein S."/>
            <person name="Koundinya M."/>
            <person name="Raphael J."/>
            <person name="Moreira D."/>
            <person name="Kelley T."/>
            <person name="LaBaer J."/>
            <person name="Lin Y."/>
            <person name="Phelan M."/>
            <person name="Farmer A."/>
        </authorList>
    </citation>
    <scope>NUCLEOTIDE SEQUENCE [LARGE SCALE MRNA]</scope>
    <scope>VARIANT MET-194</scope>
</reference>
<reference key="3">
    <citation type="journal article" date="2004" name="Nat. Genet.">
        <title>Complete sequencing and characterization of 21,243 full-length human cDNAs.</title>
        <authorList>
            <person name="Ota T."/>
            <person name="Suzuki Y."/>
            <person name="Nishikawa T."/>
            <person name="Otsuki T."/>
            <person name="Sugiyama T."/>
            <person name="Irie R."/>
            <person name="Wakamatsu A."/>
            <person name="Hayashi K."/>
            <person name="Sato H."/>
            <person name="Nagai K."/>
            <person name="Kimura K."/>
            <person name="Makita H."/>
            <person name="Sekine M."/>
            <person name="Obayashi M."/>
            <person name="Nishi T."/>
            <person name="Shibahara T."/>
            <person name="Tanaka T."/>
            <person name="Ishii S."/>
            <person name="Yamamoto J."/>
            <person name="Saito K."/>
            <person name="Kawai Y."/>
            <person name="Isono Y."/>
            <person name="Nakamura Y."/>
            <person name="Nagahari K."/>
            <person name="Murakami K."/>
            <person name="Yasuda T."/>
            <person name="Iwayanagi T."/>
            <person name="Wagatsuma M."/>
            <person name="Shiratori A."/>
            <person name="Sudo H."/>
            <person name="Hosoiri T."/>
            <person name="Kaku Y."/>
            <person name="Kodaira H."/>
            <person name="Kondo H."/>
            <person name="Sugawara M."/>
            <person name="Takahashi M."/>
            <person name="Kanda K."/>
            <person name="Yokoi T."/>
            <person name="Furuya T."/>
            <person name="Kikkawa E."/>
            <person name="Omura Y."/>
            <person name="Abe K."/>
            <person name="Kamihara K."/>
            <person name="Katsuta N."/>
            <person name="Sato K."/>
            <person name="Tanikawa M."/>
            <person name="Yamazaki M."/>
            <person name="Ninomiya K."/>
            <person name="Ishibashi T."/>
            <person name="Yamashita H."/>
            <person name="Murakawa K."/>
            <person name="Fujimori K."/>
            <person name="Tanai H."/>
            <person name="Kimata M."/>
            <person name="Watanabe M."/>
            <person name="Hiraoka S."/>
            <person name="Chiba Y."/>
            <person name="Ishida S."/>
            <person name="Ono Y."/>
            <person name="Takiguchi S."/>
            <person name="Watanabe S."/>
            <person name="Yosida M."/>
            <person name="Hotuta T."/>
            <person name="Kusano J."/>
            <person name="Kanehori K."/>
            <person name="Takahashi-Fujii A."/>
            <person name="Hara H."/>
            <person name="Tanase T.-O."/>
            <person name="Nomura Y."/>
            <person name="Togiya S."/>
            <person name="Komai F."/>
            <person name="Hara R."/>
            <person name="Takeuchi K."/>
            <person name="Arita M."/>
            <person name="Imose N."/>
            <person name="Musashino K."/>
            <person name="Yuuki H."/>
            <person name="Oshima A."/>
            <person name="Sasaki N."/>
            <person name="Aotsuka S."/>
            <person name="Yoshikawa Y."/>
            <person name="Matsunawa H."/>
            <person name="Ichihara T."/>
            <person name="Shiohata N."/>
            <person name="Sano S."/>
            <person name="Moriya S."/>
            <person name="Momiyama H."/>
            <person name="Satoh N."/>
            <person name="Takami S."/>
            <person name="Terashima Y."/>
            <person name="Suzuki O."/>
            <person name="Nakagawa S."/>
            <person name="Senoh A."/>
            <person name="Mizoguchi H."/>
            <person name="Goto Y."/>
            <person name="Shimizu F."/>
            <person name="Wakebe H."/>
            <person name="Hishigaki H."/>
            <person name="Watanabe T."/>
            <person name="Sugiyama A."/>
            <person name="Takemoto M."/>
            <person name="Kawakami B."/>
            <person name="Yamazaki M."/>
            <person name="Watanabe K."/>
            <person name="Kumagai A."/>
            <person name="Itakura S."/>
            <person name="Fukuzumi Y."/>
            <person name="Fujimori Y."/>
            <person name="Komiyama M."/>
            <person name="Tashiro H."/>
            <person name="Tanigami A."/>
            <person name="Fujiwara T."/>
            <person name="Ono T."/>
            <person name="Yamada K."/>
            <person name="Fujii Y."/>
            <person name="Ozaki K."/>
            <person name="Hirao M."/>
            <person name="Ohmori Y."/>
            <person name="Kawabata A."/>
            <person name="Hikiji T."/>
            <person name="Kobatake N."/>
            <person name="Inagaki H."/>
            <person name="Ikema Y."/>
            <person name="Okamoto S."/>
            <person name="Okitani R."/>
            <person name="Kawakami T."/>
            <person name="Noguchi S."/>
            <person name="Itoh T."/>
            <person name="Shigeta K."/>
            <person name="Senba T."/>
            <person name="Matsumura K."/>
            <person name="Nakajima Y."/>
            <person name="Mizuno T."/>
            <person name="Morinaga M."/>
            <person name="Sasaki M."/>
            <person name="Togashi T."/>
            <person name="Oyama M."/>
            <person name="Hata H."/>
            <person name="Watanabe M."/>
            <person name="Komatsu T."/>
            <person name="Mizushima-Sugano J."/>
            <person name="Satoh T."/>
            <person name="Shirai Y."/>
            <person name="Takahashi Y."/>
            <person name="Nakagawa K."/>
            <person name="Okumura K."/>
            <person name="Nagase T."/>
            <person name="Nomura N."/>
            <person name="Kikuchi H."/>
            <person name="Masuho Y."/>
            <person name="Yamashita R."/>
            <person name="Nakai K."/>
            <person name="Yada T."/>
            <person name="Nakamura Y."/>
            <person name="Ohara O."/>
            <person name="Isogai T."/>
            <person name="Sugano S."/>
        </authorList>
    </citation>
    <scope>NUCLEOTIDE SEQUENCE [LARGE SCALE MRNA]</scope>
    <source>
        <tissue>Thymus</tissue>
    </source>
</reference>
<reference key="4">
    <citation type="submission" date="2005-09" db="EMBL/GenBank/DDBJ databases">
        <authorList>
            <person name="Mural R.J."/>
            <person name="Istrail S."/>
            <person name="Sutton G.G."/>
            <person name="Florea L."/>
            <person name="Halpern A.L."/>
            <person name="Mobarry C.M."/>
            <person name="Lippert R."/>
            <person name="Walenz B."/>
            <person name="Shatkay H."/>
            <person name="Dew I."/>
            <person name="Miller J.R."/>
            <person name="Flanigan M.J."/>
            <person name="Edwards N.J."/>
            <person name="Bolanos R."/>
            <person name="Fasulo D."/>
            <person name="Halldorsson B.V."/>
            <person name="Hannenhalli S."/>
            <person name="Turner R."/>
            <person name="Yooseph S."/>
            <person name="Lu F."/>
            <person name="Nusskern D.R."/>
            <person name="Shue B.C."/>
            <person name="Zheng X.H."/>
            <person name="Zhong F."/>
            <person name="Delcher A.L."/>
            <person name="Huson D.H."/>
            <person name="Kravitz S.A."/>
            <person name="Mouchard L."/>
            <person name="Reinert K."/>
            <person name="Remington K.A."/>
            <person name="Clark A.G."/>
            <person name="Waterman M.S."/>
            <person name="Eichler E.E."/>
            <person name="Adams M.D."/>
            <person name="Hunkapiller M.W."/>
            <person name="Myers E.W."/>
            <person name="Venter J.C."/>
        </authorList>
    </citation>
    <scope>NUCLEOTIDE SEQUENCE [LARGE SCALE GENOMIC DNA]</scope>
</reference>
<reference key="5">
    <citation type="journal article" date="2004" name="Genome Res.">
        <title>The status, quality, and expansion of the NIH full-length cDNA project: the Mammalian Gene Collection (MGC).</title>
        <authorList>
            <consortium name="The MGC Project Team"/>
        </authorList>
    </citation>
    <scope>NUCLEOTIDE SEQUENCE [LARGE SCALE MRNA]</scope>
    <scope>VARIANT MET-194</scope>
    <source>
        <tissue>Lung</tissue>
    </source>
</reference>
<reference key="6">
    <citation type="journal article" date="2011" name="BMC Syst. Biol.">
        <title>Initial characterization of the human central proteome.</title>
        <authorList>
            <person name="Burkard T.R."/>
            <person name="Planyavsky M."/>
            <person name="Kaupe I."/>
            <person name="Breitwieser F.P."/>
            <person name="Buerckstuemmer T."/>
            <person name="Bennett K.L."/>
            <person name="Superti-Furga G."/>
            <person name="Colinge J."/>
        </authorList>
    </citation>
    <scope>IDENTIFICATION BY MASS SPECTROMETRY [LARGE SCALE ANALYSIS]</scope>
</reference>
<reference key="7">
    <citation type="journal article" date="2012" name="Proc. Natl. Acad. Sci. U.S.A.">
        <title>N-terminal acetylome analyses and functional insights of the N-terminal acetyltransferase NatB.</title>
        <authorList>
            <person name="Van Damme P."/>
            <person name="Lasa M."/>
            <person name="Polevoda B."/>
            <person name="Gazquez C."/>
            <person name="Elosegui-Artola A."/>
            <person name="Kim D.S."/>
            <person name="De Juan-Pardo E."/>
            <person name="Demeyer K."/>
            <person name="Hole K."/>
            <person name="Larrea E."/>
            <person name="Timmerman E."/>
            <person name="Prieto J."/>
            <person name="Arnesen T."/>
            <person name="Sherman F."/>
            <person name="Gevaert K."/>
            <person name="Aldabe R."/>
        </authorList>
    </citation>
    <scope>IDENTIFICATION BY MASS SPECTROMETRY [LARGE SCALE ANALYSIS]</scope>
</reference>
<reference key="8">
    <citation type="journal article" date="2018" name="Nat. Chem. Biol.">
        <title>The Jumonji-C oxygenase JMJD7 catalyzes (3S)-lysyl hydroxylation of TRAFAC GTPases.</title>
        <authorList>
            <person name="Markolovic S."/>
            <person name="Zhuang Q."/>
            <person name="Wilkins S.E."/>
            <person name="Eaton C.D."/>
            <person name="Abboud M.I."/>
            <person name="Katz M.J."/>
            <person name="McNeil H.E."/>
            <person name="Lesniak R.K."/>
            <person name="Hall C."/>
            <person name="Struwe W.B."/>
            <person name="Konietzny R."/>
            <person name="Davis S."/>
            <person name="Yang M."/>
            <person name="Ge W."/>
            <person name="Benesch J.L.P."/>
            <person name="Kessler B.M."/>
            <person name="Ratcliffe P.J."/>
            <person name="Cockman M.E."/>
            <person name="Fischer R."/>
            <person name="Wappner P."/>
            <person name="Chowdhury R."/>
            <person name="Coleman M.L."/>
            <person name="Schofield C.J."/>
        </authorList>
    </citation>
    <scope>FUNCTION</scope>
    <scope>SUBCELLULAR LOCATION</scope>
    <scope>MUTAGENESIS OF LYS-21</scope>
    <scope>CATALYTIC ACTIVITY</scope>
    <scope>INTERACTION WITH JMJD7</scope>
    <scope>HYDROXYLATION AT LYS-21</scope>
    <scope>COFACTOR</scope>
</reference>
<reference key="9">
    <citation type="journal article" date="2022" name="Sci. Rep.">
        <title>Conservation of the unusual dimeric JmjC fold of JMJD7 from Drosophila melanogaster to humans.</title>
        <authorList>
            <person name="Chowdhury R."/>
            <person name="Abboud M.I."/>
            <person name="Wiley J."/>
            <person name="Tumber A."/>
            <person name="Markolovic S."/>
            <person name="Schofield C.J."/>
        </authorList>
    </citation>
    <scope>HYDROXYLATION AT LYS-21</scope>
</reference>
<evidence type="ECO:0000250" key="1"/>
<evidence type="ECO:0000250" key="2">
    <source>
        <dbReference type="UniProtKB" id="Q9QXB9"/>
    </source>
</evidence>
<evidence type="ECO:0000255" key="3">
    <source>
        <dbReference type="PROSITE-ProRule" id="PRU01047"/>
    </source>
</evidence>
<evidence type="ECO:0000255" key="4">
    <source>
        <dbReference type="PROSITE-ProRule" id="PRU01228"/>
    </source>
</evidence>
<evidence type="ECO:0000269" key="5">
    <source>
    </source>
</evidence>
<evidence type="ECO:0000269" key="6">
    <source>
    </source>
</evidence>
<evidence type="ECO:0000269" key="7">
    <source>
    </source>
</evidence>
<evidence type="ECO:0000269" key="8">
    <source ref="2"/>
</evidence>
<evidence type="ECO:0000303" key="9">
    <source>
    </source>
</evidence>
<evidence type="ECO:0000305" key="10">
    <source>
    </source>
</evidence>
<evidence type="ECO:0000312" key="11">
    <source>
        <dbReference type="HGNC" id="HGNC:3030"/>
    </source>
</evidence>
<organism>
    <name type="scientific">Homo sapiens</name>
    <name type="common">Human</name>
    <dbReference type="NCBI Taxonomy" id="9606"/>
    <lineage>
        <taxon>Eukaryota</taxon>
        <taxon>Metazoa</taxon>
        <taxon>Chordata</taxon>
        <taxon>Craniata</taxon>
        <taxon>Vertebrata</taxon>
        <taxon>Euteleostomi</taxon>
        <taxon>Mammalia</taxon>
        <taxon>Eutheria</taxon>
        <taxon>Euarchontoglires</taxon>
        <taxon>Primates</taxon>
        <taxon>Haplorrhini</taxon>
        <taxon>Catarrhini</taxon>
        <taxon>Hominidae</taxon>
        <taxon>Homo</taxon>
    </lineage>
</organism>
<feature type="chain" id="PRO_0000205427" description="Developmentally-regulated GTP-binding protein 2">
    <location>
        <begin position="1"/>
        <end position="364"/>
    </location>
</feature>
<feature type="domain" description="OBG-type G" evidence="3">
    <location>
        <begin position="63"/>
        <end position="288"/>
    </location>
</feature>
<feature type="domain" description="TGS" evidence="4">
    <location>
        <begin position="288"/>
        <end position="363"/>
    </location>
</feature>
<feature type="binding site" evidence="3">
    <location>
        <begin position="69"/>
        <end position="76"/>
    </location>
    <ligand>
        <name>GTP</name>
        <dbReference type="ChEBI" id="CHEBI:37565"/>
    </ligand>
</feature>
<feature type="binding site" evidence="3">
    <location>
        <position position="76"/>
    </location>
    <ligand>
        <name>Mg(2+)</name>
        <dbReference type="ChEBI" id="CHEBI:18420"/>
    </ligand>
</feature>
<feature type="binding site" evidence="3">
    <location>
        <begin position="94"/>
        <end position="98"/>
    </location>
    <ligand>
        <name>GTP</name>
        <dbReference type="ChEBI" id="CHEBI:37565"/>
    </ligand>
</feature>
<feature type="binding site" evidence="3">
    <location>
        <position position="96"/>
    </location>
    <ligand>
        <name>Mg(2+)</name>
        <dbReference type="ChEBI" id="CHEBI:18420"/>
    </ligand>
</feature>
<feature type="binding site" evidence="3">
    <location>
        <begin position="115"/>
        <end position="118"/>
    </location>
    <ligand>
        <name>GTP</name>
        <dbReference type="ChEBI" id="CHEBI:37565"/>
    </ligand>
</feature>
<feature type="binding site" evidence="3">
    <location>
        <begin position="246"/>
        <end position="249"/>
    </location>
    <ligand>
        <name>GTP</name>
        <dbReference type="ChEBI" id="CHEBI:37565"/>
    </ligand>
</feature>
<feature type="binding site" evidence="3">
    <location>
        <begin position="269"/>
        <end position="271"/>
    </location>
    <ligand>
        <name>GTP</name>
        <dbReference type="ChEBI" id="CHEBI:37565"/>
    </ligand>
</feature>
<feature type="modified residue" description="(3S)-3-hydroxylysine" evidence="6 7">
    <location>
        <position position="21"/>
    </location>
</feature>
<feature type="sequence variant" id="VAR_067452" description="In dbSNP:rs17855350." evidence="5 8">
    <original>T</original>
    <variation>M</variation>
    <location>
        <position position="194"/>
    </location>
</feature>
<feature type="sequence variant" id="VAR_067453" description="In dbSNP:rs61256737.">
    <original>S</original>
    <variation>T</variation>
    <location>
        <position position="224"/>
    </location>
</feature>
<feature type="mutagenesis site" description="Impairs JMJD7-mediated hydroxylation and ribonucleic acid binding." evidence="6">
    <original>K</original>
    <variation>A</variation>
    <location>
        <position position="21"/>
    </location>
</feature>
<keyword id="KW-0963">Cytoplasm</keyword>
<keyword id="KW-0342">GTP-binding</keyword>
<keyword id="KW-0378">Hydrolase</keyword>
<keyword id="KW-0379">Hydroxylation</keyword>
<keyword id="KW-0460">Magnesium</keyword>
<keyword id="KW-0479">Metal-binding</keyword>
<keyword id="KW-0547">Nucleotide-binding</keyword>
<keyword id="KW-0539">Nucleus</keyword>
<keyword id="KW-1267">Proteomics identification</keyword>
<keyword id="KW-1185">Reference proteome</keyword>
<keyword id="KW-0832">Ubl conjugation</keyword>
<name>DRG2_HUMAN</name>
<proteinExistence type="evidence at protein level"/>